<dbReference type="EC" id="2.3.1.89" evidence="1"/>
<dbReference type="EMBL" id="AE008691">
    <property type="protein sequence ID" value="AAM24087.1"/>
    <property type="molecule type" value="Genomic_DNA"/>
</dbReference>
<dbReference type="SMR" id="Q8RBI7"/>
<dbReference type="STRING" id="273068.TTE0830"/>
<dbReference type="KEGG" id="tte:TTE0830"/>
<dbReference type="eggNOG" id="COG2171">
    <property type="taxonomic scope" value="Bacteria"/>
</dbReference>
<dbReference type="HOGENOM" id="CLU_103751_0_0_9"/>
<dbReference type="OrthoDB" id="9788080at2"/>
<dbReference type="UniPathway" id="UPA00034">
    <property type="reaction ID" value="UER00022"/>
</dbReference>
<dbReference type="Proteomes" id="UP000000555">
    <property type="component" value="Chromosome"/>
</dbReference>
<dbReference type="GO" id="GO:0047200">
    <property type="term" value="F:tetrahydrodipicolinate N-acetyltransferase activity"/>
    <property type="evidence" value="ECO:0007669"/>
    <property type="project" value="UniProtKB-EC"/>
</dbReference>
<dbReference type="GO" id="GO:0019877">
    <property type="term" value="P:diaminopimelate biosynthetic process"/>
    <property type="evidence" value="ECO:0007669"/>
    <property type="project" value="UniProtKB-UniRule"/>
</dbReference>
<dbReference type="GO" id="GO:0009089">
    <property type="term" value="P:lysine biosynthetic process via diaminopimelate"/>
    <property type="evidence" value="ECO:0007669"/>
    <property type="project" value="UniProtKB-UniRule"/>
</dbReference>
<dbReference type="CDD" id="cd03350">
    <property type="entry name" value="LbH_THP_succinylT"/>
    <property type="match status" value="1"/>
</dbReference>
<dbReference type="Gene3D" id="2.160.10.10">
    <property type="entry name" value="Hexapeptide repeat proteins"/>
    <property type="match status" value="1"/>
</dbReference>
<dbReference type="Gene3D" id="3.30.70.250">
    <property type="entry name" value="Malonyl-CoA ACP transacylase, ACP-binding"/>
    <property type="match status" value="1"/>
</dbReference>
<dbReference type="HAMAP" id="MF_01691">
    <property type="entry name" value="DapH"/>
    <property type="match status" value="1"/>
</dbReference>
<dbReference type="InterPro" id="IPR019873">
    <property type="entry name" value="DapH"/>
</dbReference>
<dbReference type="InterPro" id="IPR013710">
    <property type="entry name" value="DapH_N"/>
</dbReference>
<dbReference type="InterPro" id="IPR001451">
    <property type="entry name" value="Hexapep"/>
</dbReference>
<dbReference type="InterPro" id="IPR018357">
    <property type="entry name" value="Hexapep_transf_CS"/>
</dbReference>
<dbReference type="InterPro" id="IPR050179">
    <property type="entry name" value="Trans_hexapeptide_repeat"/>
</dbReference>
<dbReference type="InterPro" id="IPR011004">
    <property type="entry name" value="Trimer_LpxA-like_sf"/>
</dbReference>
<dbReference type="NCBIfam" id="TIGR03532">
    <property type="entry name" value="DapD_Ac"/>
    <property type="match status" value="1"/>
</dbReference>
<dbReference type="PANTHER" id="PTHR43300:SF10">
    <property type="entry name" value="2,3,4,5-TETRAHYDROPYRIDINE-2,6-DICARBOXYLATE N-ACETYLTRANSFERASE"/>
    <property type="match status" value="1"/>
</dbReference>
<dbReference type="PANTHER" id="PTHR43300">
    <property type="entry name" value="ACETYLTRANSFERASE"/>
    <property type="match status" value="1"/>
</dbReference>
<dbReference type="Pfam" id="PF08503">
    <property type="entry name" value="DapH_N"/>
    <property type="match status" value="1"/>
</dbReference>
<dbReference type="Pfam" id="PF00132">
    <property type="entry name" value="Hexapep"/>
    <property type="match status" value="1"/>
</dbReference>
<dbReference type="Pfam" id="PF14602">
    <property type="entry name" value="Hexapep_2"/>
    <property type="match status" value="1"/>
</dbReference>
<dbReference type="SUPFAM" id="SSF51161">
    <property type="entry name" value="Trimeric LpxA-like enzymes"/>
    <property type="match status" value="1"/>
</dbReference>
<dbReference type="PROSITE" id="PS00101">
    <property type="entry name" value="HEXAPEP_TRANSFERASES"/>
    <property type="match status" value="1"/>
</dbReference>
<name>DAPH_CALS4</name>
<keyword id="KW-0012">Acyltransferase</keyword>
<keyword id="KW-0028">Amino-acid biosynthesis</keyword>
<keyword id="KW-0220">Diaminopimelate biosynthesis</keyword>
<keyword id="KW-0457">Lysine biosynthesis</keyword>
<keyword id="KW-1185">Reference proteome</keyword>
<keyword id="KW-0677">Repeat</keyword>
<keyword id="KW-0808">Transferase</keyword>
<sequence length="241" mass="26027">MINLNTNDNLTNAYEIARYIKEAKKSTPVKAYVQGKIQVEEEEGLKIFGSEDFKILIGELEVVEKVIEQNKDRIKYYHLEYDRRNSAIPLLDITHLDARIEPGAIIRDKVKIGKNAVIMMGAVINIGAEIGENSMIDMNAVIGARGIIGKNVHVGAGAVIAGVLEPPSSVPVVIEDNVMIGANAVILEGVRVGRGAVVAAGSVVIEDVPPNTVVAGVPAKIVKVVDEKTREKTKLMEDLRG</sequence>
<organism>
    <name type="scientific">Caldanaerobacter subterraneus subsp. tengcongensis (strain DSM 15242 / JCM 11007 / NBRC 100824 / MB4)</name>
    <name type="common">Thermoanaerobacter tengcongensis</name>
    <dbReference type="NCBI Taxonomy" id="273068"/>
    <lineage>
        <taxon>Bacteria</taxon>
        <taxon>Bacillati</taxon>
        <taxon>Bacillota</taxon>
        <taxon>Clostridia</taxon>
        <taxon>Thermoanaerobacterales</taxon>
        <taxon>Thermoanaerobacteraceae</taxon>
        <taxon>Caldanaerobacter</taxon>
    </lineage>
</organism>
<protein>
    <recommendedName>
        <fullName evidence="1">2,3,4,5-tetrahydropyridine-2,6-dicarboxylate N-acetyltransferase</fullName>
        <ecNumber evidence="1">2.3.1.89</ecNumber>
    </recommendedName>
    <alternativeName>
        <fullName evidence="1">Tetrahydrodipicolinate N-acetyltransferase</fullName>
        <shortName evidence="1">THP acetyltransferase</shortName>
        <shortName evidence="1">Tetrahydropicolinate acetylase</shortName>
    </alternativeName>
</protein>
<comment type="function">
    <text evidence="1">Catalyzes the transfer of an acetyl group from acetyl-CoA to tetrahydrodipicolinate.</text>
</comment>
<comment type="catalytic activity">
    <reaction evidence="1">
        <text>(S)-2,3,4,5-tetrahydrodipicolinate + acetyl-CoA + H2O = L-2-acetamido-6-oxoheptanedioate + CoA</text>
        <dbReference type="Rhea" id="RHEA:13085"/>
        <dbReference type="ChEBI" id="CHEBI:15377"/>
        <dbReference type="ChEBI" id="CHEBI:16845"/>
        <dbReference type="ChEBI" id="CHEBI:57287"/>
        <dbReference type="ChEBI" id="CHEBI:57288"/>
        <dbReference type="ChEBI" id="CHEBI:58117"/>
        <dbReference type="EC" id="2.3.1.89"/>
    </reaction>
</comment>
<comment type="pathway">
    <text evidence="1">Amino-acid biosynthesis; L-lysine biosynthesis via DAP pathway; LL-2,6-diaminopimelate from (S)-tetrahydrodipicolinate (acetylase route): step 1/3.</text>
</comment>
<comment type="similarity">
    <text evidence="1">Belongs to the transferase hexapeptide repeat family. DapH subfamily.</text>
</comment>
<evidence type="ECO:0000255" key="1">
    <source>
        <dbReference type="HAMAP-Rule" id="MF_01691"/>
    </source>
</evidence>
<proteinExistence type="inferred from homology"/>
<reference key="1">
    <citation type="journal article" date="2002" name="Genome Res.">
        <title>A complete sequence of the T. tengcongensis genome.</title>
        <authorList>
            <person name="Bao Q."/>
            <person name="Tian Y."/>
            <person name="Li W."/>
            <person name="Xu Z."/>
            <person name="Xuan Z."/>
            <person name="Hu S."/>
            <person name="Dong W."/>
            <person name="Yang J."/>
            <person name="Chen Y."/>
            <person name="Xue Y."/>
            <person name="Xu Y."/>
            <person name="Lai X."/>
            <person name="Huang L."/>
            <person name="Dong X."/>
            <person name="Ma Y."/>
            <person name="Ling L."/>
            <person name="Tan H."/>
            <person name="Chen R."/>
            <person name="Wang J."/>
            <person name="Yu J."/>
            <person name="Yang H."/>
        </authorList>
    </citation>
    <scope>NUCLEOTIDE SEQUENCE [LARGE SCALE GENOMIC DNA]</scope>
    <source>
        <strain>DSM 15242 / JCM 11007 / NBRC 100824 / MB4</strain>
    </source>
</reference>
<accession>Q8RBI7</accession>
<feature type="chain" id="PRO_0000376725" description="2,3,4,5-tetrahydropyridine-2,6-dicarboxylate N-acetyltransferase">
    <location>
        <begin position="1"/>
        <end position="241"/>
    </location>
</feature>
<gene>
    <name evidence="1" type="primary">dapH</name>
    <name type="ordered locus">TTE0830</name>
</gene>